<sequence length="310" mass="35408">MPRLSEPSPYVEFDRKQWRALRKSTPLVLTEEELIGLRGLGEQIDLTEVAEVYLPLARLIHLQVAARQRLFAATATFLGDQHPDRLVPFVIGVAGSVAVGKSTTARVLQALLARWDHHPRVDLVTTDGFLYPNAELSRRNIMHRKGFPESYNRRGLLRFVTEVKSGAREVTAPVYSHLLYDIIKNEKHVVQQPDILILEGLNVLQTGPTLMVSDLFDFSIYVDARIEDIEQWYISRFLAMRSTSFANPSSHFHHYAKLSDKQATLAAQEIWHSINLPNLLENILPTRPRATLVLRKDADHSINRLRLRKL</sequence>
<name>COAA_MYCA9</name>
<evidence type="ECO:0000255" key="1">
    <source>
        <dbReference type="HAMAP-Rule" id="MF_00215"/>
    </source>
</evidence>
<keyword id="KW-0067">ATP-binding</keyword>
<keyword id="KW-0173">Coenzyme A biosynthesis</keyword>
<keyword id="KW-0963">Cytoplasm</keyword>
<keyword id="KW-0418">Kinase</keyword>
<keyword id="KW-0547">Nucleotide-binding</keyword>
<keyword id="KW-1185">Reference proteome</keyword>
<keyword id="KW-0808">Transferase</keyword>
<accession>B1MKN0</accession>
<protein>
    <recommendedName>
        <fullName evidence="1">Pantothenate kinase</fullName>
        <ecNumber evidence="1">2.7.1.33</ecNumber>
    </recommendedName>
    <alternativeName>
        <fullName evidence="1">Pantothenic acid kinase</fullName>
    </alternativeName>
</protein>
<gene>
    <name evidence="1" type="primary">coaA</name>
    <name type="ordered locus">MAB_1234c</name>
</gene>
<dbReference type="EC" id="2.7.1.33" evidence="1"/>
<dbReference type="EMBL" id="CU458896">
    <property type="protein sequence ID" value="CAM61322.1"/>
    <property type="molecule type" value="Genomic_DNA"/>
</dbReference>
<dbReference type="RefSeq" id="WP_005059370.1">
    <property type="nucleotide sequence ID" value="NZ_MLCG01000004.1"/>
</dbReference>
<dbReference type="SMR" id="B1MKN0"/>
<dbReference type="GeneID" id="93378184"/>
<dbReference type="KEGG" id="mab:MAB_1234c"/>
<dbReference type="UniPathway" id="UPA00241">
    <property type="reaction ID" value="UER00352"/>
</dbReference>
<dbReference type="Proteomes" id="UP000007137">
    <property type="component" value="Chromosome"/>
</dbReference>
<dbReference type="GO" id="GO:0005737">
    <property type="term" value="C:cytoplasm"/>
    <property type="evidence" value="ECO:0007669"/>
    <property type="project" value="UniProtKB-SubCell"/>
</dbReference>
<dbReference type="GO" id="GO:0005524">
    <property type="term" value="F:ATP binding"/>
    <property type="evidence" value="ECO:0007669"/>
    <property type="project" value="UniProtKB-UniRule"/>
</dbReference>
<dbReference type="GO" id="GO:0004594">
    <property type="term" value="F:pantothenate kinase activity"/>
    <property type="evidence" value="ECO:0007669"/>
    <property type="project" value="UniProtKB-UniRule"/>
</dbReference>
<dbReference type="GO" id="GO:0015937">
    <property type="term" value="P:coenzyme A biosynthetic process"/>
    <property type="evidence" value="ECO:0007669"/>
    <property type="project" value="UniProtKB-UniRule"/>
</dbReference>
<dbReference type="CDD" id="cd02025">
    <property type="entry name" value="PanK"/>
    <property type="match status" value="1"/>
</dbReference>
<dbReference type="FunFam" id="3.40.50.300:FF:000242">
    <property type="entry name" value="Pantothenate kinase"/>
    <property type="match status" value="1"/>
</dbReference>
<dbReference type="Gene3D" id="3.40.50.300">
    <property type="entry name" value="P-loop containing nucleotide triphosphate hydrolases"/>
    <property type="match status" value="1"/>
</dbReference>
<dbReference type="HAMAP" id="MF_00215">
    <property type="entry name" value="Pantothen_kinase_1"/>
    <property type="match status" value="1"/>
</dbReference>
<dbReference type="InterPro" id="IPR027417">
    <property type="entry name" value="P-loop_NTPase"/>
</dbReference>
<dbReference type="InterPro" id="IPR004566">
    <property type="entry name" value="PanK"/>
</dbReference>
<dbReference type="InterPro" id="IPR006083">
    <property type="entry name" value="PRK/URK"/>
</dbReference>
<dbReference type="NCBIfam" id="TIGR00554">
    <property type="entry name" value="panK_bact"/>
    <property type="match status" value="1"/>
</dbReference>
<dbReference type="PANTHER" id="PTHR10285">
    <property type="entry name" value="URIDINE KINASE"/>
    <property type="match status" value="1"/>
</dbReference>
<dbReference type="Pfam" id="PF00485">
    <property type="entry name" value="PRK"/>
    <property type="match status" value="1"/>
</dbReference>
<dbReference type="PIRSF" id="PIRSF000545">
    <property type="entry name" value="Pantothenate_kin"/>
    <property type="match status" value="1"/>
</dbReference>
<dbReference type="SUPFAM" id="SSF52540">
    <property type="entry name" value="P-loop containing nucleoside triphosphate hydrolases"/>
    <property type="match status" value="1"/>
</dbReference>
<feature type="chain" id="PRO_1000099937" description="Pantothenate kinase">
    <location>
        <begin position="1"/>
        <end position="310"/>
    </location>
</feature>
<feature type="binding site" evidence="1">
    <location>
        <begin position="95"/>
        <end position="102"/>
    </location>
    <ligand>
        <name>ATP</name>
        <dbReference type="ChEBI" id="CHEBI:30616"/>
    </ligand>
</feature>
<organism>
    <name type="scientific">Mycobacteroides abscessus (strain ATCC 19977 / DSM 44196 / CCUG 20993 / CIP 104536 / JCM 13569 / NCTC 13031 / TMC 1543 / L948)</name>
    <name type="common">Mycobacterium abscessus</name>
    <dbReference type="NCBI Taxonomy" id="561007"/>
    <lineage>
        <taxon>Bacteria</taxon>
        <taxon>Bacillati</taxon>
        <taxon>Actinomycetota</taxon>
        <taxon>Actinomycetes</taxon>
        <taxon>Mycobacteriales</taxon>
        <taxon>Mycobacteriaceae</taxon>
        <taxon>Mycobacteroides</taxon>
        <taxon>Mycobacteroides abscessus</taxon>
    </lineage>
</organism>
<proteinExistence type="inferred from homology"/>
<comment type="catalytic activity">
    <reaction evidence="1">
        <text>(R)-pantothenate + ATP = (R)-4'-phosphopantothenate + ADP + H(+)</text>
        <dbReference type="Rhea" id="RHEA:16373"/>
        <dbReference type="ChEBI" id="CHEBI:10986"/>
        <dbReference type="ChEBI" id="CHEBI:15378"/>
        <dbReference type="ChEBI" id="CHEBI:29032"/>
        <dbReference type="ChEBI" id="CHEBI:30616"/>
        <dbReference type="ChEBI" id="CHEBI:456216"/>
        <dbReference type="EC" id="2.7.1.33"/>
    </reaction>
</comment>
<comment type="pathway">
    <text evidence="1">Cofactor biosynthesis; coenzyme A biosynthesis; CoA from (R)-pantothenate: step 1/5.</text>
</comment>
<comment type="subcellular location">
    <subcellularLocation>
        <location evidence="1">Cytoplasm</location>
    </subcellularLocation>
</comment>
<comment type="similarity">
    <text evidence="1">Belongs to the prokaryotic pantothenate kinase family.</text>
</comment>
<reference key="1">
    <citation type="journal article" date="2009" name="PLoS ONE">
        <title>Non mycobacterial virulence genes in the genome of the emerging pathogen Mycobacterium abscessus.</title>
        <authorList>
            <person name="Ripoll F."/>
            <person name="Pasek S."/>
            <person name="Schenowitz C."/>
            <person name="Dossat C."/>
            <person name="Barbe V."/>
            <person name="Rottman M."/>
            <person name="Macheras E."/>
            <person name="Heym B."/>
            <person name="Herrmann J.L."/>
            <person name="Daffe M."/>
            <person name="Brosch R."/>
            <person name="Risler J.L."/>
            <person name="Gaillard J.L."/>
        </authorList>
    </citation>
    <scope>NUCLEOTIDE SEQUENCE [LARGE SCALE GENOMIC DNA]</scope>
    <source>
        <strain>ATCC 19977 / DSM 44196 / CCUG 20993 / CIP 104536 / JCM 13569 / NCTC 13031 / TMC 1543 / L948</strain>
    </source>
</reference>